<feature type="chain" id="PRO_1000011140" description="Phosphopantetheine adenylyltransferase">
    <location>
        <begin position="1"/>
        <end position="159"/>
    </location>
</feature>
<feature type="binding site" evidence="1">
    <location>
        <begin position="10"/>
        <end position="11"/>
    </location>
    <ligand>
        <name>ATP</name>
        <dbReference type="ChEBI" id="CHEBI:30616"/>
    </ligand>
</feature>
<feature type="binding site" evidence="1">
    <location>
        <position position="10"/>
    </location>
    <ligand>
        <name>substrate</name>
    </ligand>
</feature>
<feature type="binding site" evidence="1">
    <location>
        <position position="18"/>
    </location>
    <ligand>
        <name>ATP</name>
        <dbReference type="ChEBI" id="CHEBI:30616"/>
    </ligand>
</feature>
<feature type="binding site" evidence="1">
    <location>
        <position position="42"/>
    </location>
    <ligand>
        <name>substrate</name>
    </ligand>
</feature>
<feature type="binding site" evidence="1">
    <location>
        <position position="74"/>
    </location>
    <ligand>
        <name>substrate</name>
    </ligand>
</feature>
<feature type="binding site" evidence="1">
    <location>
        <position position="88"/>
    </location>
    <ligand>
        <name>substrate</name>
    </ligand>
</feature>
<feature type="binding site" evidence="1">
    <location>
        <begin position="89"/>
        <end position="91"/>
    </location>
    <ligand>
        <name>ATP</name>
        <dbReference type="ChEBI" id="CHEBI:30616"/>
    </ligand>
</feature>
<feature type="binding site" evidence="1">
    <location>
        <position position="99"/>
    </location>
    <ligand>
        <name>ATP</name>
        <dbReference type="ChEBI" id="CHEBI:30616"/>
    </ligand>
</feature>
<feature type="binding site" evidence="1">
    <location>
        <begin position="124"/>
        <end position="130"/>
    </location>
    <ligand>
        <name>ATP</name>
        <dbReference type="ChEBI" id="CHEBI:30616"/>
    </ligand>
</feature>
<feature type="site" description="Transition state stabilizer" evidence="1">
    <location>
        <position position="18"/>
    </location>
</feature>
<keyword id="KW-0067">ATP-binding</keyword>
<keyword id="KW-0173">Coenzyme A biosynthesis</keyword>
<keyword id="KW-0963">Cytoplasm</keyword>
<keyword id="KW-0460">Magnesium</keyword>
<keyword id="KW-0547">Nucleotide-binding</keyword>
<keyword id="KW-0548">Nucleotidyltransferase</keyword>
<keyword id="KW-0808">Transferase</keyword>
<accession>Q1R4V9</accession>
<evidence type="ECO:0000255" key="1">
    <source>
        <dbReference type="HAMAP-Rule" id="MF_00151"/>
    </source>
</evidence>
<organism>
    <name type="scientific">Escherichia coli (strain UTI89 / UPEC)</name>
    <dbReference type="NCBI Taxonomy" id="364106"/>
    <lineage>
        <taxon>Bacteria</taxon>
        <taxon>Pseudomonadati</taxon>
        <taxon>Pseudomonadota</taxon>
        <taxon>Gammaproteobacteria</taxon>
        <taxon>Enterobacterales</taxon>
        <taxon>Enterobacteriaceae</taxon>
        <taxon>Escherichia</taxon>
    </lineage>
</organism>
<sequence>MQKRAIYPGTFDPITNGHIDIVTRATQMFDHVILAIAASPSKKPMFTLEERVELAQQATAHLGNVEVVGFSDLMANFARNQHATVLIRGLRAVADFEYEMQLAHMNRHLMPELESVFLMPSKEWSFISSSLVKEVARHQGDVTHFLPENVHQALMAKLA</sequence>
<dbReference type="EC" id="2.7.7.3" evidence="1"/>
<dbReference type="EMBL" id="CP000243">
    <property type="protein sequence ID" value="ABE09605.1"/>
    <property type="molecule type" value="Genomic_DNA"/>
</dbReference>
<dbReference type="RefSeq" id="WP_001171873.1">
    <property type="nucleotide sequence ID" value="NZ_CP064825.1"/>
</dbReference>
<dbReference type="SMR" id="Q1R4V9"/>
<dbReference type="GeneID" id="75173828"/>
<dbReference type="KEGG" id="eci:UTI89_C4177"/>
<dbReference type="HOGENOM" id="CLU_100149_0_1_6"/>
<dbReference type="UniPathway" id="UPA00241">
    <property type="reaction ID" value="UER00355"/>
</dbReference>
<dbReference type="Proteomes" id="UP000001952">
    <property type="component" value="Chromosome"/>
</dbReference>
<dbReference type="GO" id="GO:0005737">
    <property type="term" value="C:cytoplasm"/>
    <property type="evidence" value="ECO:0007669"/>
    <property type="project" value="UniProtKB-SubCell"/>
</dbReference>
<dbReference type="GO" id="GO:0005524">
    <property type="term" value="F:ATP binding"/>
    <property type="evidence" value="ECO:0007669"/>
    <property type="project" value="UniProtKB-KW"/>
</dbReference>
<dbReference type="GO" id="GO:0004595">
    <property type="term" value="F:pantetheine-phosphate adenylyltransferase activity"/>
    <property type="evidence" value="ECO:0007669"/>
    <property type="project" value="UniProtKB-UniRule"/>
</dbReference>
<dbReference type="GO" id="GO:0015937">
    <property type="term" value="P:coenzyme A biosynthetic process"/>
    <property type="evidence" value="ECO:0007669"/>
    <property type="project" value="UniProtKB-UniRule"/>
</dbReference>
<dbReference type="CDD" id="cd02163">
    <property type="entry name" value="PPAT"/>
    <property type="match status" value="1"/>
</dbReference>
<dbReference type="FunFam" id="3.40.50.620:FF:000012">
    <property type="entry name" value="Phosphopantetheine adenylyltransferase"/>
    <property type="match status" value="1"/>
</dbReference>
<dbReference type="Gene3D" id="3.40.50.620">
    <property type="entry name" value="HUPs"/>
    <property type="match status" value="1"/>
</dbReference>
<dbReference type="HAMAP" id="MF_00151">
    <property type="entry name" value="PPAT_bact"/>
    <property type="match status" value="1"/>
</dbReference>
<dbReference type="InterPro" id="IPR004821">
    <property type="entry name" value="Cyt_trans-like"/>
</dbReference>
<dbReference type="InterPro" id="IPR001980">
    <property type="entry name" value="PPAT"/>
</dbReference>
<dbReference type="InterPro" id="IPR014729">
    <property type="entry name" value="Rossmann-like_a/b/a_fold"/>
</dbReference>
<dbReference type="NCBIfam" id="TIGR01510">
    <property type="entry name" value="coaD_prev_kdtB"/>
    <property type="match status" value="1"/>
</dbReference>
<dbReference type="NCBIfam" id="TIGR00125">
    <property type="entry name" value="cyt_tran_rel"/>
    <property type="match status" value="1"/>
</dbReference>
<dbReference type="PANTHER" id="PTHR21342">
    <property type="entry name" value="PHOSPHOPANTETHEINE ADENYLYLTRANSFERASE"/>
    <property type="match status" value="1"/>
</dbReference>
<dbReference type="PANTHER" id="PTHR21342:SF1">
    <property type="entry name" value="PHOSPHOPANTETHEINE ADENYLYLTRANSFERASE"/>
    <property type="match status" value="1"/>
</dbReference>
<dbReference type="Pfam" id="PF01467">
    <property type="entry name" value="CTP_transf_like"/>
    <property type="match status" value="1"/>
</dbReference>
<dbReference type="PRINTS" id="PR01020">
    <property type="entry name" value="LPSBIOSNTHSS"/>
</dbReference>
<dbReference type="SUPFAM" id="SSF52374">
    <property type="entry name" value="Nucleotidylyl transferase"/>
    <property type="match status" value="1"/>
</dbReference>
<proteinExistence type="inferred from homology"/>
<gene>
    <name evidence="1" type="primary">coaD</name>
    <name type="ordered locus">UTI89_C4177</name>
</gene>
<protein>
    <recommendedName>
        <fullName evidence="1">Phosphopantetheine adenylyltransferase</fullName>
        <ecNumber evidence="1">2.7.7.3</ecNumber>
    </recommendedName>
    <alternativeName>
        <fullName evidence="1">Dephospho-CoA pyrophosphorylase</fullName>
    </alternativeName>
    <alternativeName>
        <fullName evidence="1">Pantetheine-phosphate adenylyltransferase</fullName>
        <shortName evidence="1">PPAT</shortName>
    </alternativeName>
</protein>
<name>COAD_ECOUT</name>
<reference key="1">
    <citation type="journal article" date="2006" name="Proc. Natl. Acad. Sci. U.S.A.">
        <title>Identification of genes subject to positive selection in uropathogenic strains of Escherichia coli: a comparative genomics approach.</title>
        <authorList>
            <person name="Chen S.L."/>
            <person name="Hung C.-S."/>
            <person name="Xu J."/>
            <person name="Reigstad C.S."/>
            <person name="Magrini V."/>
            <person name="Sabo A."/>
            <person name="Blasiar D."/>
            <person name="Bieri T."/>
            <person name="Meyer R.R."/>
            <person name="Ozersky P."/>
            <person name="Armstrong J.R."/>
            <person name="Fulton R.S."/>
            <person name="Latreille J.P."/>
            <person name="Spieth J."/>
            <person name="Hooton T.M."/>
            <person name="Mardis E.R."/>
            <person name="Hultgren S.J."/>
            <person name="Gordon J.I."/>
        </authorList>
    </citation>
    <scope>NUCLEOTIDE SEQUENCE [LARGE SCALE GENOMIC DNA]</scope>
    <source>
        <strain>UTI89 / UPEC</strain>
    </source>
</reference>
<comment type="function">
    <text evidence="1">Reversibly transfers an adenylyl group from ATP to 4'-phosphopantetheine, yielding dephospho-CoA (dPCoA) and pyrophosphate.</text>
</comment>
<comment type="catalytic activity">
    <reaction evidence="1">
        <text>(R)-4'-phosphopantetheine + ATP + H(+) = 3'-dephospho-CoA + diphosphate</text>
        <dbReference type="Rhea" id="RHEA:19801"/>
        <dbReference type="ChEBI" id="CHEBI:15378"/>
        <dbReference type="ChEBI" id="CHEBI:30616"/>
        <dbReference type="ChEBI" id="CHEBI:33019"/>
        <dbReference type="ChEBI" id="CHEBI:57328"/>
        <dbReference type="ChEBI" id="CHEBI:61723"/>
        <dbReference type="EC" id="2.7.7.3"/>
    </reaction>
</comment>
<comment type="cofactor">
    <cofactor evidence="1">
        <name>Mg(2+)</name>
        <dbReference type="ChEBI" id="CHEBI:18420"/>
    </cofactor>
</comment>
<comment type="pathway">
    <text evidence="1">Cofactor biosynthesis; coenzyme A biosynthesis; CoA from (R)-pantothenate: step 4/5.</text>
</comment>
<comment type="subunit">
    <text evidence="1">Homohexamer.</text>
</comment>
<comment type="subcellular location">
    <subcellularLocation>
        <location evidence="1">Cytoplasm</location>
    </subcellularLocation>
</comment>
<comment type="similarity">
    <text evidence="1">Belongs to the bacterial CoaD family.</text>
</comment>